<reference key="1">
    <citation type="journal article" date="1990" name="Neuron">
        <title>Molecular analysis of no-on-transient A, a gene required for normal vision in Drosophila.</title>
        <authorList>
            <person name="Jones K.R."/>
            <person name="Rubin G.M."/>
        </authorList>
    </citation>
    <scope>NUCLEOTIDE SEQUENCE [MRNA] (ISOFORMS 1 AND 2)</scope>
    <scope>FUNCTION</scope>
</reference>
<reference key="2">
    <citation type="journal article" date="1990" name="Chromosoma">
        <title>The puff-specific Drosophila protein Bj6, encoded by the gene no-on transient A, shows homology to RNA-binding proteins.</title>
        <authorList>
            <person name="Von Besser H."/>
            <person name="Schnabel P."/>
            <person name="Wieland C."/>
            <person name="Fritz E."/>
            <person name="Stanewsky R."/>
            <person name="Saumweber H."/>
        </authorList>
    </citation>
    <scope>NUCLEOTIDE SEQUENCE [MRNA] (ISOFORM 1)</scope>
    <scope>DEVELOPMENTAL STAGE</scope>
    <source>
        <strain>Oregon-R</strain>
    </source>
</reference>
<reference key="3">
    <citation type="journal article" date="2000" name="Science">
        <title>The genome sequence of Drosophila melanogaster.</title>
        <authorList>
            <person name="Adams M.D."/>
            <person name="Celniker S.E."/>
            <person name="Holt R.A."/>
            <person name="Evans C.A."/>
            <person name="Gocayne J.D."/>
            <person name="Amanatides P.G."/>
            <person name="Scherer S.E."/>
            <person name="Li P.W."/>
            <person name="Hoskins R.A."/>
            <person name="Galle R.F."/>
            <person name="George R.A."/>
            <person name="Lewis S.E."/>
            <person name="Richards S."/>
            <person name="Ashburner M."/>
            <person name="Henderson S.N."/>
            <person name="Sutton G.G."/>
            <person name="Wortman J.R."/>
            <person name="Yandell M.D."/>
            <person name="Zhang Q."/>
            <person name="Chen L.X."/>
            <person name="Brandon R.C."/>
            <person name="Rogers Y.-H.C."/>
            <person name="Blazej R.G."/>
            <person name="Champe M."/>
            <person name="Pfeiffer B.D."/>
            <person name="Wan K.H."/>
            <person name="Doyle C."/>
            <person name="Baxter E.G."/>
            <person name="Helt G."/>
            <person name="Nelson C.R."/>
            <person name="Miklos G.L.G."/>
            <person name="Abril J.F."/>
            <person name="Agbayani A."/>
            <person name="An H.-J."/>
            <person name="Andrews-Pfannkoch C."/>
            <person name="Baldwin D."/>
            <person name="Ballew R.M."/>
            <person name="Basu A."/>
            <person name="Baxendale J."/>
            <person name="Bayraktaroglu L."/>
            <person name="Beasley E.M."/>
            <person name="Beeson K.Y."/>
            <person name="Benos P.V."/>
            <person name="Berman B.P."/>
            <person name="Bhandari D."/>
            <person name="Bolshakov S."/>
            <person name="Borkova D."/>
            <person name="Botchan M.R."/>
            <person name="Bouck J."/>
            <person name="Brokstein P."/>
            <person name="Brottier P."/>
            <person name="Burtis K.C."/>
            <person name="Busam D.A."/>
            <person name="Butler H."/>
            <person name="Cadieu E."/>
            <person name="Center A."/>
            <person name="Chandra I."/>
            <person name="Cherry J.M."/>
            <person name="Cawley S."/>
            <person name="Dahlke C."/>
            <person name="Davenport L.B."/>
            <person name="Davies P."/>
            <person name="de Pablos B."/>
            <person name="Delcher A."/>
            <person name="Deng Z."/>
            <person name="Mays A.D."/>
            <person name="Dew I."/>
            <person name="Dietz S.M."/>
            <person name="Dodson K."/>
            <person name="Doup L.E."/>
            <person name="Downes M."/>
            <person name="Dugan-Rocha S."/>
            <person name="Dunkov B.C."/>
            <person name="Dunn P."/>
            <person name="Durbin K.J."/>
            <person name="Evangelista C.C."/>
            <person name="Ferraz C."/>
            <person name="Ferriera S."/>
            <person name="Fleischmann W."/>
            <person name="Fosler C."/>
            <person name="Gabrielian A.E."/>
            <person name="Garg N.S."/>
            <person name="Gelbart W.M."/>
            <person name="Glasser K."/>
            <person name="Glodek A."/>
            <person name="Gong F."/>
            <person name="Gorrell J.H."/>
            <person name="Gu Z."/>
            <person name="Guan P."/>
            <person name="Harris M."/>
            <person name="Harris N.L."/>
            <person name="Harvey D.A."/>
            <person name="Heiman T.J."/>
            <person name="Hernandez J.R."/>
            <person name="Houck J."/>
            <person name="Hostin D."/>
            <person name="Houston K.A."/>
            <person name="Howland T.J."/>
            <person name="Wei M.-H."/>
            <person name="Ibegwam C."/>
            <person name="Jalali M."/>
            <person name="Kalush F."/>
            <person name="Karpen G.H."/>
            <person name="Ke Z."/>
            <person name="Kennison J.A."/>
            <person name="Ketchum K.A."/>
            <person name="Kimmel B.E."/>
            <person name="Kodira C.D."/>
            <person name="Kraft C.L."/>
            <person name="Kravitz S."/>
            <person name="Kulp D."/>
            <person name="Lai Z."/>
            <person name="Lasko P."/>
            <person name="Lei Y."/>
            <person name="Levitsky A.A."/>
            <person name="Li J.H."/>
            <person name="Li Z."/>
            <person name="Liang Y."/>
            <person name="Lin X."/>
            <person name="Liu X."/>
            <person name="Mattei B."/>
            <person name="McIntosh T.C."/>
            <person name="McLeod M.P."/>
            <person name="McPherson D."/>
            <person name="Merkulov G."/>
            <person name="Milshina N.V."/>
            <person name="Mobarry C."/>
            <person name="Morris J."/>
            <person name="Moshrefi A."/>
            <person name="Mount S.M."/>
            <person name="Moy M."/>
            <person name="Murphy B."/>
            <person name="Murphy L."/>
            <person name="Muzny D.M."/>
            <person name="Nelson D.L."/>
            <person name="Nelson D.R."/>
            <person name="Nelson K.A."/>
            <person name="Nixon K."/>
            <person name="Nusskern D.R."/>
            <person name="Pacleb J.M."/>
            <person name="Palazzolo M."/>
            <person name="Pittman G.S."/>
            <person name="Pan S."/>
            <person name="Pollard J."/>
            <person name="Puri V."/>
            <person name="Reese M.G."/>
            <person name="Reinert K."/>
            <person name="Remington K."/>
            <person name="Saunders R.D.C."/>
            <person name="Scheeler F."/>
            <person name="Shen H."/>
            <person name="Shue B.C."/>
            <person name="Siden-Kiamos I."/>
            <person name="Simpson M."/>
            <person name="Skupski M.P."/>
            <person name="Smith T.J."/>
            <person name="Spier E."/>
            <person name="Spradling A.C."/>
            <person name="Stapleton M."/>
            <person name="Strong R."/>
            <person name="Sun E."/>
            <person name="Svirskas R."/>
            <person name="Tector C."/>
            <person name="Turner R."/>
            <person name="Venter E."/>
            <person name="Wang A.H."/>
            <person name="Wang X."/>
            <person name="Wang Z.-Y."/>
            <person name="Wassarman D.A."/>
            <person name="Weinstock G.M."/>
            <person name="Weissenbach J."/>
            <person name="Williams S.M."/>
            <person name="Woodage T."/>
            <person name="Worley K.C."/>
            <person name="Wu D."/>
            <person name="Yang S."/>
            <person name="Yao Q.A."/>
            <person name="Ye J."/>
            <person name="Yeh R.-F."/>
            <person name="Zaveri J.S."/>
            <person name="Zhan M."/>
            <person name="Zhang G."/>
            <person name="Zhao Q."/>
            <person name="Zheng L."/>
            <person name="Zheng X.H."/>
            <person name="Zhong F.N."/>
            <person name="Zhong W."/>
            <person name="Zhou X."/>
            <person name="Zhu S.C."/>
            <person name="Zhu X."/>
            <person name="Smith H.O."/>
            <person name="Gibbs R.A."/>
            <person name="Myers E.W."/>
            <person name="Rubin G.M."/>
            <person name="Venter J.C."/>
        </authorList>
    </citation>
    <scope>NUCLEOTIDE SEQUENCE [LARGE SCALE GENOMIC DNA]</scope>
    <source>
        <strain>Berkeley</strain>
    </source>
</reference>
<reference key="4">
    <citation type="journal article" date="2002" name="Genome Biol.">
        <title>Annotation of the Drosophila melanogaster euchromatic genome: a systematic review.</title>
        <authorList>
            <person name="Misra S."/>
            <person name="Crosby M.A."/>
            <person name="Mungall C.J."/>
            <person name="Matthews B.B."/>
            <person name="Campbell K.S."/>
            <person name="Hradecky P."/>
            <person name="Huang Y."/>
            <person name="Kaminker J.S."/>
            <person name="Millburn G.H."/>
            <person name="Prochnik S.E."/>
            <person name="Smith C.D."/>
            <person name="Tupy J.L."/>
            <person name="Whitfield E.J."/>
            <person name="Bayraktaroglu L."/>
            <person name="Berman B.P."/>
            <person name="Bettencourt B.R."/>
            <person name="Celniker S.E."/>
            <person name="de Grey A.D.N.J."/>
            <person name="Drysdale R.A."/>
            <person name="Harris N.L."/>
            <person name="Richter J."/>
            <person name="Russo S."/>
            <person name="Schroeder A.J."/>
            <person name="Shu S.Q."/>
            <person name="Stapleton M."/>
            <person name="Yamada C."/>
            <person name="Ashburner M."/>
            <person name="Gelbart W.M."/>
            <person name="Rubin G.M."/>
            <person name="Lewis S.E."/>
        </authorList>
    </citation>
    <scope>GENOME REANNOTATION</scope>
    <scope>ALTERNATIVE SPLICING</scope>
    <source>
        <strain>Berkeley</strain>
    </source>
</reference>
<reference key="5">
    <citation type="journal article" date="2002" name="Genome Biol.">
        <title>A Drosophila full-length cDNA resource.</title>
        <authorList>
            <person name="Stapleton M."/>
            <person name="Carlson J.W."/>
            <person name="Brokstein P."/>
            <person name="Yu C."/>
            <person name="Champe M."/>
            <person name="George R.A."/>
            <person name="Guarin H."/>
            <person name="Kronmiller B."/>
            <person name="Pacleb J.M."/>
            <person name="Park S."/>
            <person name="Wan K.H."/>
            <person name="Rubin G.M."/>
            <person name="Celniker S.E."/>
        </authorList>
    </citation>
    <scope>NUCLEOTIDE SEQUENCE [LARGE SCALE MRNA] (ISOFORM 1)</scope>
    <source>
        <strain>Berkeley</strain>
        <tissue>Embryo</tissue>
    </source>
</reference>
<reference key="6">
    <citation type="journal article" date="2008" name="J. Proteome Res.">
        <title>Phosphoproteome analysis of Drosophila melanogaster embryos.</title>
        <authorList>
            <person name="Zhai B."/>
            <person name="Villen J."/>
            <person name="Beausoleil S.A."/>
            <person name="Mintseris J."/>
            <person name="Gygi S.P."/>
        </authorList>
    </citation>
    <scope>PHOSPHORYLATION [LARGE SCALE ANALYSIS] AT SER-236</scope>
    <scope>IDENTIFICATION BY MASS SPECTROMETRY</scope>
    <source>
        <tissue>Embryo</tissue>
    </source>
</reference>
<evidence type="ECO:0000255" key="1"/>
<evidence type="ECO:0000255" key="2">
    <source>
        <dbReference type="PROSITE-ProRule" id="PRU00176"/>
    </source>
</evidence>
<evidence type="ECO:0000256" key="3">
    <source>
        <dbReference type="SAM" id="MobiDB-lite"/>
    </source>
</evidence>
<evidence type="ECO:0000269" key="4">
    <source>
    </source>
</evidence>
<evidence type="ECO:0000269" key="5">
    <source>
    </source>
</evidence>
<evidence type="ECO:0000269" key="6">
    <source>
    </source>
</evidence>
<evidence type="ECO:0000303" key="7">
    <source>
    </source>
</evidence>
<evidence type="ECO:0000305" key="8"/>
<dbReference type="EMBL" id="M33496">
    <property type="protein sequence ID" value="AAA03214.1"/>
    <property type="molecule type" value="Unassigned_DNA"/>
</dbReference>
<dbReference type="EMBL" id="M33496">
    <property type="protein sequence ID" value="AAA03215.1"/>
    <property type="molecule type" value="Unassigned_DNA"/>
</dbReference>
<dbReference type="EMBL" id="X55902">
    <property type="protein sequence ID" value="CAA39395.1"/>
    <property type="molecule type" value="mRNA"/>
</dbReference>
<dbReference type="EMBL" id="AE014298">
    <property type="protein sequence ID" value="AAF48597.2"/>
    <property type="molecule type" value="Genomic_DNA"/>
</dbReference>
<dbReference type="EMBL" id="AE014298">
    <property type="protein sequence ID" value="AAX52501.1"/>
    <property type="molecule type" value="Genomic_DNA"/>
</dbReference>
<dbReference type="EMBL" id="AY119651">
    <property type="protein sequence ID" value="AAM50305.1"/>
    <property type="molecule type" value="mRNA"/>
</dbReference>
<dbReference type="PIR" id="JH0162">
    <property type="entry name" value="JH0162"/>
</dbReference>
<dbReference type="PIR" id="JH0163">
    <property type="entry name" value="JH0163"/>
</dbReference>
<dbReference type="RefSeq" id="NP_001014747.1">
    <molecule id="Q04047-2"/>
    <property type="nucleotide sequence ID" value="NM_001014747.2"/>
</dbReference>
<dbReference type="RefSeq" id="NP_001285324.1">
    <molecule id="Q04047-1"/>
    <property type="nucleotide sequence ID" value="NM_001298395.1"/>
</dbReference>
<dbReference type="RefSeq" id="NP_523367.2">
    <molecule id="Q04047-1"/>
    <property type="nucleotide sequence ID" value="NM_078643.3"/>
</dbReference>
<dbReference type="SMR" id="Q04047"/>
<dbReference type="BioGRID" id="58943">
    <property type="interactions" value="20"/>
</dbReference>
<dbReference type="FunCoup" id="Q04047">
    <property type="interactions" value="342"/>
</dbReference>
<dbReference type="IntAct" id="Q04047">
    <property type="interactions" value="7"/>
</dbReference>
<dbReference type="MINT" id="Q04047"/>
<dbReference type="STRING" id="7227.FBpp0074012"/>
<dbReference type="iPTMnet" id="Q04047"/>
<dbReference type="PaxDb" id="7227-FBpp0074012"/>
<dbReference type="ABCD" id="Q04047">
    <property type="antibodies" value="4 sequenced antibodies"/>
</dbReference>
<dbReference type="DNASU" id="32603"/>
<dbReference type="EnsemblMetazoa" id="FBtr0074232">
    <molecule id="Q04047-1"/>
    <property type="protein sequence ID" value="FBpp0074011"/>
    <property type="gene ID" value="FBgn0004227"/>
</dbReference>
<dbReference type="EnsemblMetazoa" id="FBtr0100586">
    <molecule id="Q04047-2"/>
    <property type="protein sequence ID" value="FBpp0100043"/>
    <property type="gene ID" value="FBgn0004227"/>
</dbReference>
<dbReference type="EnsemblMetazoa" id="FBtr0340313">
    <molecule id="Q04047-1"/>
    <property type="protein sequence ID" value="FBpp0309274"/>
    <property type="gene ID" value="FBgn0004227"/>
</dbReference>
<dbReference type="GeneID" id="32603"/>
<dbReference type="KEGG" id="dme:Dmel_CG4211"/>
<dbReference type="AGR" id="FB:FBgn0004227"/>
<dbReference type="CTD" id="32603"/>
<dbReference type="FlyBase" id="FBgn0004227">
    <property type="gene designation" value="nonA"/>
</dbReference>
<dbReference type="VEuPathDB" id="VectorBase:FBgn0004227"/>
<dbReference type="eggNOG" id="KOG0115">
    <property type="taxonomic scope" value="Eukaryota"/>
</dbReference>
<dbReference type="GeneTree" id="ENSGT00940000169018"/>
<dbReference type="HOGENOM" id="CLU_027185_3_0_1"/>
<dbReference type="InParanoid" id="Q04047"/>
<dbReference type="OrthoDB" id="10067824at2759"/>
<dbReference type="PhylomeDB" id="Q04047"/>
<dbReference type="SignaLink" id="Q04047"/>
<dbReference type="BioGRID-ORCS" id="32603">
    <property type="hits" value="1 hit in 3 CRISPR screens"/>
</dbReference>
<dbReference type="ChiTaRS" id="nonA">
    <property type="organism name" value="fly"/>
</dbReference>
<dbReference type="GenomeRNAi" id="32603"/>
<dbReference type="PRO" id="PR:Q04047"/>
<dbReference type="Proteomes" id="UP000000803">
    <property type="component" value="Chromosome X"/>
</dbReference>
<dbReference type="Bgee" id="FBgn0004227">
    <property type="expression patterns" value="Expressed in leg muscle motor neuron in post-embryonic organism and 280 other cell types or tissues"/>
</dbReference>
<dbReference type="ExpressionAtlas" id="Q04047">
    <property type="expression patterns" value="baseline and differential"/>
</dbReference>
<dbReference type="GO" id="GO:0071013">
    <property type="term" value="C:catalytic step 2 spliceosome"/>
    <property type="evidence" value="ECO:0007005"/>
    <property type="project" value="FlyBase"/>
</dbReference>
<dbReference type="GO" id="GO:0005634">
    <property type="term" value="C:nucleus"/>
    <property type="evidence" value="ECO:0000314"/>
    <property type="project" value="FlyBase"/>
</dbReference>
<dbReference type="GO" id="GO:0071011">
    <property type="term" value="C:precatalytic spliceosome"/>
    <property type="evidence" value="ECO:0007005"/>
    <property type="project" value="FlyBase"/>
</dbReference>
<dbReference type="GO" id="GO:0003729">
    <property type="term" value="F:mRNA binding"/>
    <property type="evidence" value="ECO:0000250"/>
    <property type="project" value="FlyBase"/>
</dbReference>
<dbReference type="GO" id="GO:0003723">
    <property type="term" value="F:RNA binding"/>
    <property type="evidence" value="ECO:0000318"/>
    <property type="project" value="GO_Central"/>
</dbReference>
<dbReference type="GO" id="GO:0045433">
    <property type="term" value="P:male courtship behavior, veined wing generated song production"/>
    <property type="evidence" value="ECO:0000315"/>
    <property type="project" value="FlyBase"/>
</dbReference>
<dbReference type="GO" id="GO:0000398">
    <property type="term" value="P:mRNA splicing, via spliceosome"/>
    <property type="evidence" value="ECO:0000305"/>
    <property type="project" value="FlyBase"/>
</dbReference>
<dbReference type="GO" id="GO:0042331">
    <property type="term" value="P:phototaxis"/>
    <property type="evidence" value="ECO:0000303"/>
    <property type="project" value="FlyBase"/>
</dbReference>
<dbReference type="GO" id="GO:0006355">
    <property type="term" value="P:regulation of DNA-templated transcription"/>
    <property type="evidence" value="ECO:0000318"/>
    <property type="project" value="GO_Central"/>
</dbReference>
<dbReference type="GO" id="GO:0007632">
    <property type="term" value="P:visual behavior"/>
    <property type="evidence" value="ECO:0000303"/>
    <property type="project" value="FlyBase"/>
</dbReference>
<dbReference type="GO" id="GO:0007601">
    <property type="term" value="P:visual perception"/>
    <property type="evidence" value="ECO:0000315"/>
    <property type="project" value="FlyBase"/>
</dbReference>
<dbReference type="CDD" id="cd12945">
    <property type="entry name" value="NOPS_NONA_like"/>
    <property type="match status" value="1"/>
</dbReference>
<dbReference type="CDD" id="cd12332">
    <property type="entry name" value="RRM1_p54nrb_like"/>
    <property type="match status" value="1"/>
</dbReference>
<dbReference type="CDD" id="cd12333">
    <property type="entry name" value="RRM2_p54nrb_like"/>
    <property type="match status" value="1"/>
</dbReference>
<dbReference type="FunFam" id="3.30.70.330:FF:000043">
    <property type="entry name" value="paraspeckle component 1 isoform X1"/>
    <property type="match status" value="1"/>
</dbReference>
<dbReference type="FunFam" id="3.30.70.330:FF:000513">
    <property type="entry name" value="Splicing factor, proline-and glutamine-rich"/>
    <property type="match status" value="1"/>
</dbReference>
<dbReference type="Gene3D" id="3.30.70.330">
    <property type="match status" value="2"/>
</dbReference>
<dbReference type="Gene3D" id="6.10.250.1170">
    <property type="match status" value="1"/>
</dbReference>
<dbReference type="InterPro" id="IPR012975">
    <property type="entry name" value="NOPS"/>
</dbReference>
<dbReference type="InterPro" id="IPR012677">
    <property type="entry name" value="Nucleotide-bd_a/b_plait_sf"/>
</dbReference>
<dbReference type="InterPro" id="IPR035979">
    <property type="entry name" value="RBD_domain_sf"/>
</dbReference>
<dbReference type="InterPro" id="IPR000504">
    <property type="entry name" value="RRM_dom"/>
</dbReference>
<dbReference type="PANTHER" id="PTHR23189">
    <property type="entry name" value="RNA RECOGNITION MOTIF-CONTAINING"/>
    <property type="match status" value="1"/>
</dbReference>
<dbReference type="Pfam" id="PF08075">
    <property type="entry name" value="NOPS"/>
    <property type="match status" value="1"/>
</dbReference>
<dbReference type="Pfam" id="PF00076">
    <property type="entry name" value="RRM_1"/>
    <property type="match status" value="2"/>
</dbReference>
<dbReference type="SMART" id="SM00360">
    <property type="entry name" value="RRM"/>
    <property type="match status" value="2"/>
</dbReference>
<dbReference type="SUPFAM" id="SSF54928">
    <property type="entry name" value="RNA-binding domain, RBD"/>
    <property type="match status" value="1"/>
</dbReference>
<dbReference type="PROSITE" id="PS50102">
    <property type="entry name" value="RRM"/>
    <property type="match status" value="2"/>
</dbReference>
<feature type="chain" id="PRO_0000081662" description="Protein no-on-transient A">
    <location>
        <begin position="1"/>
        <end position="700"/>
    </location>
</feature>
<feature type="domain" description="RRM 1" evidence="2">
    <location>
        <begin position="302"/>
        <end position="374"/>
    </location>
</feature>
<feature type="domain" description="RRM 2" evidence="2">
    <location>
        <begin position="376"/>
        <end position="457"/>
    </location>
</feature>
<feature type="region of interest" description="Disordered" evidence="3">
    <location>
        <begin position="1"/>
        <end position="270"/>
    </location>
</feature>
<feature type="region of interest" description="Disordered" evidence="3">
    <location>
        <begin position="568"/>
        <end position="591"/>
    </location>
</feature>
<feature type="region of interest" description="Disordered" evidence="3">
    <location>
        <begin position="677"/>
        <end position="700"/>
    </location>
</feature>
<feature type="coiled-coil region" evidence="1">
    <location>
        <begin position="505"/>
        <end position="616"/>
    </location>
</feature>
<feature type="compositionally biased region" description="Low complexity" evidence="3">
    <location>
        <begin position="9"/>
        <end position="29"/>
    </location>
</feature>
<feature type="compositionally biased region" description="Low complexity" evidence="3">
    <location>
        <begin position="54"/>
        <end position="69"/>
    </location>
</feature>
<feature type="compositionally biased region" description="Gly residues" evidence="3">
    <location>
        <begin position="70"/>
        <end position="79"/>
    </location>
</feature>
<feature type="compositionally biased region" description="Low complexity" evidence="3">
    <location>
        <begin position="80"/>
        <end position="89"/>
    </location>
</feature>
<feature type="compositionally biased region" description="Low complexity" evidence="3">
    <location>
        <begin position="96"/>
        <end position="124"/>
    </location>
</feature>
<feature type="compositionally biased region" description="Low complexity" evidence="3">
    <location>
        <begin position="144"/>
        <end position="175"/>
    </location>
</feature>
<feature type="compositionally biased region" description="Gly residues" evidence="3">
    <location>
        <begin position="176"/>
        <end position="208"/>
    </location>
</feature>
<feature type="compositionally biased region" description="Gly residues" evidence="3">
    <location>
        <begin position="253"/>
        <end position="266"/>
    </location>
</feature>
<feature type="compositionally biased region" description="Basic and acidic residues" evidence="3">
    <location>
        <begin position="568"/>
        <end position="582"/>
    </location>
</feature>
<feature type="compositionally biased region" description="Gly residues" evidence="3">
    <location>
        <begin position="682"/>
        <end position="691"/>
    </location>
</feature>
<feature type="modified residue" description="Phosphoserine" evidence="4">
    <location>
        <position position="236"/>
    </location>
</feature>
<feature type="splice variant" id="VSP_005801" description="In isoform 2." evidence="7">
    <original>DSFAFEFGVNNMNQGGNQRGNNGGGNNVPWGRRRF</original>
    <variation>VCPHPKYYPTKYSVTNRSVELQELLSMIPFMKL</variation>
    <location>
        <begin position="666"/>
        <end position="700"/>
    </location>
</feature>
<feature type="sequence conflict" description="In Ref. 1 and 2." evidence="8" ref="1 2">
    <original>P</original>
    <variation>S</variation>
    <location>
        <position position="118"/>
    </location>
</feature>
<feature type="sequence conflict" description="In Ref. 2; CAA39395." evidence="8" ref="2">
    <original>A</original>
    <variation>R</variation>
    <location>
        <position position="350"/>
    </location>
</feature>
<gene>
    <name type="primary">nonA</name>
    <name type="ORF">CG4211</name>
</gene>
<proteinExistence type="evidence at protein level"/>
<name>NONA_DROME</name>
<comment type="function">
    <text evidence="6">Required for normal vision and courtship behavior in Drosophila.</text>
</comment>
<comment type="alternative products">
    <event type="alternative splicing"/>
    <isoform>
        <id>Q04047-1</id>
        <name>1</name>
        <name>A</name>
        <name>I</name>
        <sequence type="displayed"/>
    </isoform>
    <isoform>
        <id>Q04047-2</id>
        <name>2</name>
        <name>C</name>
        <name>II</name>
        <sequence type="described" ref="VSP_005801"/>
    </isoform>
</comment>
<comment type="developmental stage">
    <text evidence="5">Expressed ubiquitously during embryonic development with prominent expression during the first 12 hours of embryogenesis.</text>
</comment>
<protein>
    <recommendedName>
        <fullName>Protein no-on-transient A</fullName>
    </recommendedName>
    <alternativeName>
        <fullName>Puff-specific protein Bj6</fullName>
    </alternativeName>
</protein>
<organism>
    <name type="scientific">Drosophila melanogaster</name>
    <name type="common">Fruit fly</name>
    <dbReference type="NCBI Taxonomy" id="7227"/>
    <lineage>
        <taxon>Eukaryota</taxon>
        <taxon>Metazoa</taxon>
        <taxon>Ecdysozoa</taxon>
        <taxon>Arthropoda</taxon>
        <taxon>Hexapoda</taxon>
        <taxon>Insecta</taxon>
        <taxon>Pterygota</taxon>
        <taxon>Neoptera</taxon>
        <taxon>Endopterygota</taxon>
        <taxon>Diptera</taxon>
        <taxon>Brachycera</taxon>
        <taxon>Muscomorpha</taxon>
        <taxon>Ephydroidea</taxon>
        <taxon>Drosophilidae</taxon>
        <taxon>Drosophila</taxon>
        <taxon>Sophophora</taxon>
    </lineage>
</organism>
<keyword id="KW-0025">Alternative splicing</keyword>
<keyword id="KW-0175">Coiled coil</keyword>
<keyword id="KW-0597">Phosphoprotein</keyword>
<keyword id="KW-1185">Reference proteome</keyword>
<keyword id="KW-0677">Repeat</keyword>
<keyword id="KW-0694">RNA-binding</keyword>
<keyword id="KW-0716">Sensory transduction</keyword>
<keyword id="KW-0844">Vision</keyword>
<sequence length="700" mass="76977">MESAGKQDNNATQQLPQRQQRGNQQANKNLGKHNAQKQNDSADGGPAEKKQRFGGPNAQNQNQNQNQNGGVTGGGGAVGGPNQNKNFGNNKGGFVGNRNRNNNRAGNQNRTFPGNNNPNQKPNNETSKADGPNALAKNNEPATAAAGQNQANQNANKGQNQRQGQNQNQNQVHGQGNQGGPGNQGGAGNQGGQGNQGGAGNQGNGQGFRGRNAGNNQGGGFSGGPQNQQRDNRNRSGPRPGGGAGGAMNSTNMGGGGGGGGGGGPRGGEDFFITQRLRSISGPTFELEPVEVPTETKFSGRNRLYVGNLTNDITDDELREMFKPYGEISEIFSNLDKNFTFLKVDYHPNAEKAKRALDGSMRKGRQLRVRFAPNATILRVSNLTPFVSNELLYKSFEIFGPIERASITVDDRGKHMGEGIVEFAKKSSASACLRMCNEKCFFLTASLRPCLVDPMEVNDDTDGLPEKAFNKKMPDFNQERSIGPRFADPNSFEHEYGSRWKQLHNLFKTKQDALKRELKMEEDKLEAQMEYARYEQETELLRQELRKREVDNERKKLEWEMREKQAEEMRKREEETMRRHQTEMQSHMNRQEEDMLRRQQETLFMKAQQLNSLLDQQEGFGGGGGGNNSTFDNFAGNSNSPFEVFRGNNNNNSTMIGNNAAPNTQDSFAFEFGVNNMNQGGNQRGNNGGGNNVPWGRRRF</sequence>
<accession>Q04047</accession>
<accession>Q24261</accession>
<accession>Q59E42</accession>
<accession>Q9VXH1</accession>